<evidence type="ECO:0000255" key="1">
    <source>
        <dbReference type="HAMAP-Rule" id="MF_00489"/>
    </source>
</evidence>
<dbReference type="EMBL" id="CP001144">
    <property type="protein sequence ID" value="ACH76549.1"/>
    <property type="molecule type" value="Genomic_DNA"/>
</dbReference>
<dbReference type="RefSeq" id="WP_000158137.1">
    <property type="nucleotide sequence ID" value="NC_011205.1"/>
</dbReference>
<dbReference type="KEGG" id="sed:SeD_A0425"/>
<dbReference type="HOGENOM" id="CLU_106619_1_0_6"/>
<dbReference type="Proteomes" id="UP000008322">
    <property type="component" value="Chromosome"/>
</dbReference>
<dbReference type="CDD" id="cd18720">
    <property type="entry name" value="PIN_YqxD-like"/>
    <property type="match status" value="1"/>
</dbReference>
<dbReference type="HAMAP" id="MF_00489">
    <property type="entry name" value="UPF0178"/>
    <property type="match status" value="1"/>
</dbReference>
<dbReference type="InterPro" id="IPR003791">
    <property type="entry name" value="UPF0178"/>
</dbReference>
<dbReference type="NCBIfam" id="NF001095">
    <property type="entry name" value="PRK00124.1"/>
    <property type="match status" value="1"/>
</dbReference>
<dbReference type="PANTHER" id="PTHR35146">
    <property type="entry name" value="UPF0178 PROTEIN YAII"/>
    <property type="match status" value="1"/>
</dbReference>
<dbReference type="PANTHER" id="PTHR35146:SF1">
    <property type="entry name" value="UPF0178 PROTEIN YAII"/>
    <property type="match status" value="1"/>
</dbReference>
<dbReference type="Pfam" id="PF02639">
    <property type="entry name" value="DUF188"/>
    <property type="match status" value="1"/>
</dbReference>
<comment type="similarity">
    <text evidence="1">Belongs to the UPF0178 family.</text>
</comment>
<reference key="1">
    <citation type="journal article" date="2011" name="J. Bacteriol.">
        <title>Comparative genomics of 28 Salmonella enterica isolates: evidence for CRISPR-mediated adaptive sublineage evolution.</title>
        <authorList>
            <person name="Fricke W.F."/>
            <person name="Mammel M.K."/>
            <person name="McDermott P.F."/>
            <person name="Tartera C."/>
            <person name="White D.G."/>
            <person name="Leclerc J.E."/>
            <person name="Ravel J."/>
            <person name="Cebula T.A."/>
        </authorList>
    </citation>
    <scope>NUCLEOTIDE SEQUENCE [LARGE SCALE GENOMIC DNA]</scope>
    <source>
        <strain>CT_02021853</strain>
    </source>
</reference>
<feature type="chain" id="PRO_1000126208" description="UPF0178 protein YaiI">
    <location>
        <begin position="1"/>
        <end position="151"/>
    </location>
</feature>
<gene>
    <name evidence="1" type="primary">yaiI</name>
    <name type="ordered locus">SeD_A0425</name>
</gene>
<name>YAII_SALDC</name>
<organism>
    <name type="scientific">Salmonella dublin (strain CT_02021853)</name>
    <dbReference type="NCBI Taxonomy" id="439851"/>
    <lineage>
        <taxon>Bacteria</taxon>
        <taxon>Pseudomonadati</taxon>
        <taxon>Pseudomonadota</taxon>
        <taxon>Gammaproteobacteria</taxon>
        <taxon>Enterobacterales</taxon>
        <taxon>Enterobacteriaceae</taxon>
        <taxon>Salmonella</taxon>
    </lineage>
</organism>
<proteinExistence type="inferred from homology"/>
<sequence>MTIWVDADACPNVIKEILYRAAERMQLPLILVANQALRVPPSRFIRTLRVAAGFDVADNEIVRQCEAGDLVITADIPLAAEVLEKGAAALNPRGERYSDATIRERLTMRDFMDTLRASGVQTGGPNTLSPRDRQHFAAELDKWWLESQRKK</sequence>
<accession>B5FKP2</accession>
<protein>
    <recommendedName>
        <fullName evidence="1">UPF0178 protein YaiI</fullName>
    </recommendedName>
</protein>